<organism>
    <name type="scientific">Leptospira biflexa serovar Patoc (strain Patoc 1 / Ames)</name>
    <dbReference type="NCBI Taxonomy" id="355278"/>
    <lineage>
        <taxon>Bacteria</taxon>
        <taxon>Pseudomonadati</taxon>
        <taxon>Spirochaetota</taxon>
        <taxon>Spirochaetia</taxon>
        <taxon>Leptospirales</taxon>
        <taxon>Leptospiraceae</taxon>
        <taxon>Leptospira</taxon>
    </lineage>
</organism>
<dbReference type="EC" id="6.1.1.7" evidence="1"/>
<dbReference type="EMBL" id="CP000777">
    <property type="protein sequence ID" value="ABZ93857.1"/>
    <property type="molecule type" value="Genomic_DNA"/>
</dbReference>
<dbReference type="RefSeq" id="WP_012388380.1">
    <property type="nucleotide sequence ID" value="NC_010842.1"/>
</dbReference>
<dbReference type="SMR" id="B0SGD3"/>
<dbReference type="KEGG" id="lbf:LBF_1337"/>
<dbReference type="HOGENOM" id="CLU_004485_1_1_12"/>
<dbReference type="GO" id="GO:0005829">
    <property type="term" value="C:cytosol"/>
    <property type="evidence" value="ECO:0007669"/>
    <property type="project" value="TreeGrafter"/>
</dbReference>
<dbReference type="GO" id="GO:0004813">
    <property type="term" value="F:alanine-tRNA ligase activity"/>
    <property type="evidence" value="ECO:0007669"/>
    <property type="project" value="UniProtKB-UniRule"/>
</dbReference>
<dbReference type="GO" id="GO:0002161">
    <property type="term" value="F:aminoacyl-tRNA deacylase activity"/>
    <property type="evidence" value="ECO:0007669"/>
    <property type="project" value="TreeGrafter"/>
</dbReference>
<dbReference type="GO" id="GO:0005524">
    <property type="term" value="F:ATP binding"/>
    <property type="evidence" value="ECO:0007669"/>
    <property type="project" value="UniProtKB-UniRule"/>
</dbReference>
<dbReference type="GO" id="GO:0000049">
    <property type="term" value="F:tRNA binding"/>
    <property type="evidence" value="ECO:0007669"/>
    <property type="project" value="UniProtKB-KW"/>
</dbReference>
<dbReference type="GO" id="GO:0008270">
    <property type="term" value="F:zinc ion binding"/>
    <property type="evidence" value="ECO:0007669"/>
    <property type="project" value="UniProtKB-UniRule"/>
</dbReference>
<dbReference type="GO" id="GO:0006419">
    <property type="term" value="P:alanyl-tRNA aminoacylation"/>
    <property type="evidence" value="ECO:0007669"/>
    <property type="project" value="UniProtKB-UniRule"/>
</dbReference>
<dbReference type="CDD" id="cd00673">
    <property type="entry name" value="AlaRS_core"/>
    <property type="match status" value="1"/>
</dbReference>
<dbReference type="FunFam" id="2.40.30.130:FF:000001">
    <property type="entry name" value="Alanine--tRNA ligase"/>
    <property type="match status" value="1"/>
</dbReference>
<dbReference type="FunFam" id="3.10.310.40:FF:000001">
    <property type="entry name" value="Alanine--tRNA ligase"/>
    <property type="match status" value="1"/>
</dbReference>
<dbReference type="FunFam" id="3.30.54.20:FF:000001">
    <property type="entry name" value="Alanine--tRNA ligase"/>
    <property type="match status" value="1"/>
</dbReference>
<dbReference type="FunFam" id="3.30.930.10:FF:000004">
    <property type="entry name" value="Alanine--tRNA ligase"/>
    <property type="match status" value="1"/>
</dbReference>
<dbReference type="FunFam" id="3.30.980.10:FF:000004">
    <property type="entry name" value="Alanine--tRNA ligase, cytoplasmic"/>
    <property type="match status" value="1"/>
</dbReference>
<dbReference type="Gene3D" id="2.40.30.130">
    <property type="match status" value="1"/>
</dbReference>
<dbReference type="Gene3D" id="3.10.310.40">
    <property type="match status" value="1"/>
</dbReference>
<dbReference type="Gene3D" id="3.30.54.20">
    <property type="match status" value="1"/>
</dbReference>
<dbReference type="Gene3D" id="3.30.930.10">
    <property type="entry name" value="Bira Bifunctional Protein, Domain 2"/>
    <property type="match status" value="1"/>
</dbReference>
<dbReference type="Gene3D" id="3.30.980.10">
    <property type="entry name" value="Threonyl-trna Synthetase, Chain A, domain 2"/>
    <property type="match status" value="1"/>
</dbReference>
<dbReference type="HAMAP" id="MF_00036_B">
    <property type="entry name" value="Ala_tRNA_synth_B"/>
    <property type="match status" value="1"/>
</dbReference>
<dbReference type="InterPro" id="IPR045864">
    <property type="entry name" value="aa-tRNA-synth_II/BPL/LPL"/>
</dbReference>
<dbReference type="InterPro" id="IPR002318">
    <property type="entry name" value="Ala-tRNA-lgiase_IIc"/>
</dbReference>
<dbReference type="InterPro" id="IPR018162">
    <property type="entry name" value="Ala-tRNA-ligase_IIc_anticod-bd"/>
</dbReference>
<dbReference type="InterPro" id="IPR018165">
    <property type="entry name" value="Ala-tRNA-synth_IIc_core"/>
</dbReference>
<dbReference type="InterPro" id="IPR018164">
    <property type="entry name" value="Ala-tRNA-synth_IIc_N"/>
</dbReference>
<dbReference type="InterPro" id="IPR050058">
    <property type="entry name" value="Ala-tRNA_ligase"/>
</dbReference>
<dbReference type="InterPro" id="IPR023033">
    <property type="entry name" value="Ala_tRNA_ligase_euk/bac"/>
</dbReference>
<dbReference type="InterPro" id="IPR003156">
    <property type="entry name" value="DHHA1_dom"/>
</dbReference>
<dbReference type="InterPro" id="IPR018163">
    <property type="entry name" value="Thr/Ala-tRNA-synth_IIc_edit"/>
</dbReference>
<dbReference type="InterPro" id="IPR009000">
    <property type="entry name" value="Transl_B-barrel_sf"/>
</dbReference>
<dbReference type="InterPro" id="IPR012947">
    <property type="entry name" value="tRNA_SAD"/>
</dbReference>
<dbReference type="NCBIfam" id="TIGR00344">
    <property type="entry name" value="alaS"/>
    <property type="match status" value="1"/>
</dbReference>
<dbReference type="PANTHER" id="PTHR11777:SF9">
    <property type="entry name" value="ALANINE--TRNA LIGASE, CYTOPLASMIC"/>
    <property type="match status" value="1"/>
</dbReference>
<dbReference type="PANTHER" id="PTHR11777">
    <property type="entry name" value="ALANYL-TRNA SYNTHETASE"/>
    <property type="match status" value="1"/>
</dbReference>
<dbReference type="Pfam" id="PF02272">
    <property type="entry name" value="DHHA1"/>
    <property type="match status" value="1"/>
</dbReference>
<dbReference type="Pfam" id="PF01411">
    <property type="entry name" value="tRNA-synt_2c"/>
    <property type="match status" value="1"/>
</dbReference>
<dbReference type="Pfam" id="PF07973">
    <property type="entry name" value="tRNA_SAD"/>
    <property type="match status" value="1"/>
</dbReference>
<dbReference type="PRINTS" id="PR00980">
    <property type="entry name" value="TRNASYNTHALA"/>
</dbReference>
<dbReference type="SMART" id="SM00863">
    <property type="entry name" value="tRNA_SAD"/>
    <property type="match status" value="1"/>
</dbReference>
<dbReference type="SUPFAM" id="SSF55681">
    <property type="entry name" value="Class II aaRS and biotin synthetases"/>
    <property type="match status" value="1"/>
</dbReference>
<dbReference type="SUPFAM" id="SSF101353">
    <property type="entry name" value="Putative anticodon-binding domain of alanyl-tRNA synthetase (AlaRS)"/>
    <property type="match status" value="1"/>
</dbReference>
<dbReference type="SUPFAM" id="SSF55186">
    <property type="entry name" value="ThrRS/AlaRS common domain"/>
    <property type="match status" value="1"/>
</dbReference>
<dbReference type="SUPFAM" id="SSF50447">
    <property type="entry name" value="Translation proteins"/>
    <property type="match status" value="1"/>
</dbReference>
<dbReference type="PROSITE" id="PS50860">
    <property type="entry name" value="AA_TRNA_LIGASE_II_ALA"/>
    <property type="match status" value="1"/>
</dbReference>
<sequence length="919" mass="103288">MKFKTVQEIARLYTNYFQDKGHTIVPSSSLIPKGDPTLLFTTAGMVQFKPLFTGAVELPYTRAASVQKCVRTTDLEVVGKTERHCTFFEMLGNFSFGDYFKKEAIEYALDFSLNHLEIPKDKIWVTIYLDDDEAKKFWMDLGIPEERIVRLGKKDNFWGPAGDSGACGPCSELYLDRGPEKGGPTCGNNPNCKPGCDCDRYLEYWNLVFNQFNQTVSGELLPLKQTGIDTGSGLERVAMLLQEVDSVYDTDELKSIIKQIEILSGYKYDETTKQSFRVITDHSRSVFFSLGDGIYPDRTGRGYVIRRLIRRASLFARKLGIHEPFLYKLVSTLKDLYSLRYPELKDKAKDIESILKKEEELFLHTLEVGLEELETVLEHLKKEKQTVVTGKEGFRLYSTYGFPREMTKELVEERGFSFDDKGFEEELEKDRYLSRASWKGKKIQYLTGFSASPELKTEFLGYTETKAKSRVLHLFVDGKSVTSTKQGEEAVIVLDKTPFYAEGGGQIGDTGYLKKEGFQFQVQDTQKENDTFLHMGMILKGNLSVGDVVDSEIEVERRQNLANHHSGTHLLNGALRRILGSHVTQKGSIVSADYLRFDFSHPKALSKEEIIQIETDVNEAVSANIPVKTEVLEIGQAKESGALSMFDEKYGSVVRVISMGDKSKEFCGGTHVSNTKEIGFFAIVKEGSPGAGNRRIEAICGESVVNYFLHQFQTLASKIETHNLSAKETFGDLKEFGITKEVPSPEILQTMFHQDGKEVVTRLRKLREELEIELEEKSSALFKAKKKREQKEFQMNPELVDGLLQKAHHFPKGKVVTEVFPSVDAKSLKDLADSLKAKEPEILCLFGTTEGESSTLVFMCNKVLNERGIHCGDILKETLVMLDGKGGGRPDMAQGGGKKPESVAKSLEFALSLAKIKLS</sequence>
<comment type="function">
    <text evidence="1">Catalyzes the attachment of alanine to tRNA(Ala) in a two-step reaction: alanine is first activated by ATP to form Ala-AMP and then transferred to the acceptor end of tRNA(Ala). Also edits incorrectly charged Ser-tRNA(Ala) and Gly-tRNA(Ala) via its editing domain.</text>
</comment>
<comment type="catalytic activity">
    <reaction evidence="1">
        <text>tRNA(Ala) + L-alanine + ATP = L-alanyl-tRNA(Ala) + AMP + diphosphate</text>
        <dbReference type="Rhea" id="RHEA:12540"/>
        <dbReference type="Rhea" id="RHEA-COMP:9657"/>
        <dbReference type="Rhea" id="RHEA-COMP:9923"/>
        <dbReference type="ChEBI" id="CHEBI:30616"/>
        <dbReference type="ChEBI" id="CHEBI:33019"/>
        <dbReference type="ChEBI" id="CHEBI:57972"/>
        <dbReference type="ChEBI" id="CHEBI:78442"/>
        <dbReference type="ChEBI" id="CHEBI:78497"/>
        <dbReference type="ChEBI" id="CHEBI:456215"/>
        <dbReference type="EC" id="6.1.1.7"/>
    </reaction>
</comment>
<comment type="cofactor">
    <cofactor evidence="1">
        <name>Zn(2+)</name>
        <dbReference type="ChEBI" id="CHEBI:29105"/>
    </cofactor>
    <text evidence="1">Binds 1 zinc ion per subunit.</text>
</comment>
<comment type="subcellular location">
    <subcellularLocation>
        <location evidence="1">Cytoplasm</location>
    </subcellularLocation>
</comment>
<comment type="domain">
    <text evidence="1">Consists of three domains; the N-terminal catalytic domain, the editing domain and the C-terminal C-Ala domain. The editing domain removes incorrectly charged amino acids, while the C-Ala domain, along with tRNA(Ala), serves as a bridge to cooperatively bring together the editing and aminoacylation centers thus stimulating deacylation of misacylated tRNAs.</text>
</comment>
<comment type="similarity">
    <text evidence="1">Belongs to the class-II aminoacyl-tRNA synthetase family.</text>
</comment>
<protein>
    <recommendedName>
        <fullName evidence="1">Alanine--tRNA ligase</fullName>
        <ecNumber evidence="1">6.1.1.7</ecNumber>
    </recommendedName>
    <alternativeName>
        <fullName evidence="1">Alanyl-tRNA synthetase</fullName>
        <shortName evidence="1">AlaRS</shortName>
    </alternativeName>
</protein>
<gene>
    <name evidence="1" type="primary">alaS</name>
    <name type="ordered locus">LBF_1337</name>
</gene>
<accession>B0SGD3</accession>
<evidence type="ECO:0000255" key="1">
    <source>
        <dbReference type="HAMAP-Rule" id="MF_00036"/>
    </source>
</evidence>
<proteinExistence type="inferred from homology"/>
<name>SYA_LEPBA</name>
<feature type="chain" id="PRO_0000347655" description="Alanine--tRNA ligase">
    <location>
        <begin position="1"/>
        <end position="919"/>
    </location>
</feature>
<feature type="binding site" evidence="1">
    <location>
        <position position="565"/>
    </location>
    <ligand>
        <name>Zn(2+)</name>
        <dbReference type="ChEBI" id="CHEBI:29105"/>
    </ligand>
</feature>
<feature type="binding site" evidence="1">
    <location>
        <position position="569"/>
    </location>
    <ligand>
        <name>Zn(2+)</name>
        <dbReference type="ChEBI" id="CHEBI:29105"/>
    </ligand>
</feature>
<feature type="binding site" evidence="1">
    <location>
        <position position="667"/>
    </location>
    <ligand>
        <name>Zn(2+)</name>
        <dbReference type="ChEBI" id="CHEBI:29105"/>
    </ligand>
</feature>
<feature type="binding site" evidence="1">
    <location>
        <position position="671"/>
    </location>
    <ligand>
        <name>Zn(2+)</name>
        <dbReference type="ChEBI" id="CHEBI:29105"/>
    </ligand>
</feature>
<reference key="1">
    <citation type="journal article" date="2008" name="PLoS ONE">
        <title>Genome sequence of the saprophyte Leptospira biflexa provides insights into the evolution of Leptospira and the pathogenesis of leptospirosis.</title>
        <authorList>
            <person name="Picardeau M."/>
            <person name="Bulach D.M."/>
            <person name="Bouchier C."/>
            <person name="Zuerner R.L."/>
            <person name="Zidane N."/>
            <person name="Wilson P.J."/>
            <person name="Creno S."/>
            <person name="Kuczek E.S."/>
            <person name="Bommezzadri S."/>
            <person name="Davis J.C."/>
            <person name="McGrath A."/>
            <person name="Johnson M.J."/>
            <person name="Boursaux-Eude C."/>
            <person name="Seemann T."/>
            <person name="Rouy Z."/>
            <person name="Coppel R.L."/>
            <person name="Rood J.I."/>
            <person name="Lajus A."/>
            <person name="Davies J.K."/>
            <person name="Medigue C."/>
            <person name="Adler B."/>
        </authorList>
    </citation>
    <scope>NUCLEOTIDE SEQUENCE [LARGE SCALE GENOMIC DNA]</scope>
    <source>
        <strain>Patoc 1 / Ames</strain>
    </source>
</reference>
<keyword id="KW-0030">Aminoacyl-tRNA synthetase</keyword>
<keyword id="KW-0067">ATP-binding</keyword>
<keyword id="KW-0963">Cytoplasm</keyword>
<keyword id="KW-0436">Ligase</keyword>
<keyword id="KW-0479">Metal-binding</keyword>
<keyword id="KW-0547">Nucleotide-binding</keyword>
<keyword id="KW-0648">Protein biosynthesis</keyword>
<keyword id="KW-0694">RNA-binding</keyword>
<keyword id="KW-0820">tRNA-binding</keyword>
<keyword id="KW-0862">Zinc</keyword>